<organism>
    <name type="scientific">Acidaminococcus fermentans (strain ATCC 25085 / DSM 20731 / CCUG 9996 / CIP 106432 / VR4)</name>
    <dbReference type="NCBI Taxonomy" id="591001"/>
    <lineage>
        <taxon>Bacteria</taxon>
        <taxon>Bacillati</taxon>
        <taxon>Bacillota</taxon>
        <taxon>Negativicutes</taxon>
        <taxon>Acidaminococcales</taxon>
        <taxon>Acidaminococcaceae</taxon>
        <taxon>Acidaminococcus</taxon>
    </lineage>
</organism>
<gene>
    <name evidence="1" type="primary">secD</name>
    <name type="ordered locus">Acfer_1522</name>
</gene>
<accession>D2RLC8</accession>
<name>SECD_ACIFV</name>
<evidence type="ECO:0000255" key="1">
    <source>
        <dbReference type="HAMAP-Rule" id="MF_01463"/>
    </source>
</evidence>
<sequence length="417" mass="44352">MESKNRAKLLVSVLAIVIAFAVFIKPLVSTVKQGLDLQGGTHVVLQAQETPESKVDDDAINRSIQIISRRVNELGLTEPVIQRQGKDKIIVELPGVKDPEQAIAMLGKTAMLEFKDMEGNTVLTGKDLKDSKASADQSGQPVVTLQFNEDGAKKFADLTARNVGRQIAILLDGKVLTAPRVSEPITGGNAQITGSKDAKEAEHLAILLRSGSLPVKLEVVENRTVGPTLGQDAKDASMKAFAIGLAGVFLFMLLYYRLSGLVADIVLLLYTLLLLAVMKGLNATLTLPGMAGIILSIGMAVDANVLIFERFKEEIANGKTLRAAVNSGFSRAFTTILDSNVTTLMAAAVLFYLGTGPIKGFAVTLALGVLISMFTAVTVTKFILGALIGSNFTKNPAWFGAKAFQPKAKDGKGEAAR</sequence>
<keyword id="KW-1003">Cell membrane</keyword>
<keyword id="KW-0472">Membrane</keyword>
<keyword id="KW-0653">Protein transport</keyword>
<keyword id="KW-1185">Reference proteome</keyword>
<keyword id="KW-0811">Translocation</keyword>
<keyword id="KW-0812">Transmembrane</keyword>
<keyword id="KW-1133">Transmembrane helix</keyword>
<keyword id="KW-0813">Transport</keyword>
<comment type="function">
    <text evidence="1">Part of the Sec protein translocase complex. Interacts with the SecYEG preprotein conducting channel. SecDF uses the proton motive force (PMF) to complete protein translocation after the ATP-dependent function of SecA.</text>
</comment>
<comment type="subunit">
    <text evidence="1">Forms a complex with SecF. Part of the essential Sec protein translocation apparatus which comprises SecA, SecYEG and auxiliary proteins SecDF. Other proteins may also be involved.</text>
</comment>
<comment type="subcellular location">
    <subcellularLocation>
        <location evidence="1">Cell membrane</location>
        <topology evidence="1">Multi-pass membrane protein</topology>
    </subcellularLocation>
</comment>
<comment type="similarity">
    <text evidence="1">Belongs to the SecD/SecF family. SecD subfamily.</text>
</comment>
<proteinExistence type="inferred from homology"/>
<dbReference type="EMBL" id="CP001859">
    <property type="protein sequence ID" value="ADB47880.1"/>
    <property type="molecule type" value="Genomic_DNA"/>
</dbReference>
<dbReference type="RefSeq" id="WP_012938865.1">
    <property type="nucleotide sequence ID" value="NC_013740.1"/>
</dbReference>
<dbReference type="SMR" id="D2RLC8"/>
<dbReference type="STRING" id="591001.Acfer_1522"/>
<dbReference type="GeneID" id="78335214"/>
<dbReference type="KEGG" id="afn:Acfer_1522"/>
<dbReference type="eggNOG" id="COG0342">
    <property type="taxonomic scope" value="Bacteria"/>
</dbReference>
<dbReference type="HOGENOM" id="CLU_007894_4_2_9"/>
<dbReference type="OrthoDB" id="9805019at2"/>
<dbReference type="Proteomes" id="UP000001902">
    <property type="component" value="Chromosome"/>
</dbReference>
<dbReference type="GO" id="GO:0005886">
    <property type="term" value="C:plasma membrane"/>
    <property type="evidence" value="ECO:0007669"/>
    <property type="project" value="UniProtKB-SubCell"/>
</dbReference>
<dbReference type="GO" id="GO:0015450">
    <property type="term" value="F:protein-transporting ATPase activity"/>
    <property type="evidence" value="ECO:0007669"/>
    <property type="project" value="InterPro"/>
</dbReference>
<dbReference type="GO" id="GO:0065002">
    <property type="term" value="P:intracellular protein transmembrane transport"/>
    <property type="evidence" value="ECO:0007669"/>
    <property type="project" value="UniProtKB-UniRule"/>
</dbReference>
<dbReference type="GO" id="GO:0006605">
    <property type="term" value="P:protein targeting"/>
    <property type="evidence" value="ECO:0007669"/>
    <property type="project" value="UniProtKB-UniRule"/>
</dbReference>
<dbReference type="GO" id="GO:0043952">
    <property type="term" value="P:protein transport by the Sec complex"/>
    <property type="evidence" value="ECO:0007669"/>
    <property type="project" value="UniProtKB-UniRule"/>
</dbReference>
<dbReference type="FunFam" id="1.20.1640.10:FF:000004">
    <property type="entry name" value="Protein translocase subunit SecD"/>
    <property type="match status" value="1"/>
</dbReference>
<dbReference type="Gene3D" id="3.30.1360.200">
    <property type="match status" value="1"/>
</dbReference>
<dbReference type="Gene3D" id="1.20.1640.10">
    <property type="entry name" value="Multidrug efflux transporter AcrB transmembrane domain"/>
    <property type="match status" value="1"/>
</dbReference>
<dbReference type="HAMAP" id="MF_01463_B">
    <property type="entry name" value="SecD_B"/>
    <property type="match status" value="1"/>
</dbReference>
<dbReference type="InterPro" id="IPR005791">
    <property type="entry name" value="SecD"/>
</dbReference>
<dbReference type="InterPro" id="IPR022813">
    <property type="entry name" value="SecD/SecF_arch_bac"/>
</dbReference>
<dbReference type="InterPro" id="IPR022646">
    <property type="entry name" value="SecD/SecF_CS"/>
</dbReference>
<dbReference type="InterPro" id="IPR048631">
    <property type="entry name" value="SecD_1st"/>
</dbReference>
<dbReference type="InterPro" id="IPR048634">
    <property type="entry name" value="SecD_SecF_C"/>
</dbReference>
<dbReference type="InterPro" id="IPR055344">
    <property type="entry name" value="SecD_SecF_C_bact"/>
</dbReference>
<dbReference type="InterPro" id="IPR054384">
    <property type="entry name" value="SecDF_P1_head"/>
</dbReference>
<dbReference type="NCBIfam" id="TIGR00916">
    <property type="entry name" value="2A0604s01"/>
    <property type="match status" value="1"/>
</dbReference>
<dbReference type="NCBIfam" id="TIGR01129">
    <property type="entry name" value="secD"/>
    <property type="match status" value="1"/>
</dbReference>
<dbReference type="PANTHER" id="PTHR30081:SF1">
    <property type="entry name" value="PROTEIN TRANSLOCASE SUBUNIT SECD"/>
    <property type="match status" value="1"/>
</dbReference>
<dbReference type="PANTHER" id="PTHR30081">
    <property type="entry name" value="PROTEIN-EXPORT MEMBRANE PROTEIN SEC"/>
    <property type="match status" value="1"/>
</dbReference>
<dbReference type="Pfam" id="PF07549">
    <property type="entry name" value="Sec_GG"/>
    <property type="match status" value="1"/>
</dbReference>
<dbReference type="Pfam" id="PF21760">
    <property type="entry name" value="SecD_1st"/>
    <property type="match status" value="1"/>
</dbReference>
<dbReference type="Pfam" id="PF02355">
    <property type="entry name" value="SecD_SecF_C"/>
    <property type="match status" value="1"/>
</dbReference>
<dbReference type="Pfam" id="PF22599">
    <property type="entry name" value="SecDF_P1_head"/>
    <property type="match status" value="1"/>
</dbReference>
<dbReference type="SUPFAM" id="SSF82866">
    <property type="entry name" value="Multidrug efflux transporter AcrB transmembrane domain"/>
    <property type="match status" value="1"/>
</dbReference>
<feature type="chain" id="PRO_0000412671" description="Protein translocase subunit SecD">
    <location>
        <begin position="1"/>
        <end position="417"/>
    </location>
</feature>
<feature type="transmembrane region" description="Helical" evidence="1">
    <location>
        <begin position="9"/>
        <end position="29"/>
    </location>
</feature>
<feature type="transmembrane region" description="Helical" evidence="1">
    <location>
        <begin position="236"/>
        <end position="256"/>
    </location>
</feature>
<feature type="transmembrane region" description="Helical" evidence="1">
    <location>
        <begin position="258"/>
        <end position="278"/>
    </location>
</feature>
<feature type="transmembrane region" description="Helical" evidence="1">
    <location>
        <begin position="288"/>
        <end position="308"/>
    </location>
</feature>
<feature type="transmembrane region" description="Helical" evidence="1">
    <location>
        <begin position="333"/>
        <end position="353"/>
    </location>
</feature>
<feature type="transmembrane region" description="Helical" evidence="1">
    <location>
        <begin position="360"/>
        <end position="380"/>
    </location>
</feature>
<protein>
    <recommendedName>
        <fullName evidence="1">Protein translocase subunit SecD</fullName>
    </recommendedName>
</protein>
<reference key="1">
    <citation type="journal article" date="2010" name="Stand. Genomic Sci.">
        <title>Complete genome sequence of Acidaminococcus fermentans type strain (VR4).</title>
        <authorList>
            <person name="Chang Y.J."/>
            <person name="Pukall R."/>
            <person name="Saunders E."/>
            <person name="Lapidus A."/>
            <person name="Copeland A."/>
            <person name="Nolan M."/>
            <person name="Glavina Del Rio T."/>
            <person name="Lucas S."/>
            <person name="Chen F."/>
            <person name="Tice H."/>
            <person name="Cheng J.F."/>
            <person name="Han C."/>
            <person name="Detter J.C."/>
            <person name="Bruce D."/>
            <person name="Goodwin L."/>
            <person name="Pitluck S."/>
            <person name="Mikhailova N."/>
            <person name="Liolios K."/>
            <person name="Pati A."/>
            <person name="Ivanova N."/>
            <person name="Mavromatis K."/>
            <person name="Chen A."/>
            <person name="Palaniappan K."/>
            <person name="Land M."/>
            <person name="Hauser L."/>
            <person name="Jeffries C.D."/>
            <person name="Brettin T."/>
            <person name="Rohde M."/>
            <person name="Goker M."/>
            <person name="Bristow J."/>
            <person name="Eisen J.A."/>
            <person name="Markowitz V."/>
            <person name="Hugenholtz P."/>
            <person name="Kyrpides N.C."/>
            <person name="Klenk H.P."/>
        </authorList>
    </citation>
    <scope>NUCLEOTIDE SEQUENCE [LARGE SCALE GENOMIC DNA]</scope>
    <source>
        <strain>ATCC 25085 / DSM 20731 / CCUG 9996 / CIP 106432 / VR4</strain>
    </source>
</reference>